<proteinExistence type="inferred from homology"/>
<name>CAN1_CANAW</name>
<gene>
    <name type="primary">CAN1</name>
</gene>
<sequence length="571" mass="63358">MPEDYEKYRMGSSNESHQKLVQPISSSISKSNKKTKHQTDFVQDSDIIEASSINDEFGEVKRDLKARHVSMIAIGGTIGTGLFISTGSLLHTTGPVMSLISFLFVTTICFSVTQSLGEMATYIPISGSFAQFVTRWVSKSCGAANGWLYWFSWAVTFGLELSVVGQVIQFWTDAVPLAAWISIFFVILTIFNFFPVKFYGEVEFWIASIKIIAVFGWIIYAFIMVCGAGKTGPVGFRYWRNGYAWGDGILVNNNGKYVAAFVSGLINSIFTFQGTELVAVTAGEASPRALRSAIRKVMFRILVFYVLCMLFMGLLVPYNDPKLTQDGGFTRNSPFLIAMENSGTKVLPHIFNAVIVTTIISAGNSNIYSGSRILYGLAQAGVAPKFFLRTNKGGVPFFAVAFTAAFGALGYLACSSQGNKAFTWLLNITATAGLISWGFISVSHIRFMKTLQRRGISRDTLPFKAFFMPFSAYYGMVVCFIVVLIQGFTVFWDFNASDFFTAYISVILFVVLWVGFHFFFYGFGKDSFKMSNILVPLDECDIDSGVRDINDAEFDIPPPKNAWDKFWANVA</sequence>
<evidence type="ECO:0000255" key="1"/>
<evidence type="ECO:0000256" key="2">
    <source>
        <dbReference type="SAM" id="MobiDB-lite"/>
    </source>
</evidence>
<evidence type="ECO:0000305" key="3"/>
<accession>P43059</accession>
<comment type="function">
    <text>High-affinity permease for arginine and lysine.</text>
</comment>
<comment type="subcellular location">
    <subcellularLocation>
        <location>Membrane</location>
        <topology>Multi-pass membrane protein</topology>
    </subcellularLocation>
</comment>
<comment type="similarity">
    <text evidence="3">Belongs to the amino acid-polyamine-organocation (APC) superfamily. YAT (TC 2.A.3.10) family.</text>
</comment>
<reference key="1">
    <citation type="journal article" date="1994" name="Yeast">
        <title>CAN1, a gene encoding a permease for basic amino acids in Candida albicans.</title>
        <authorList>
            <person name="Sychorova H."/>
            <person name="Souciet J.-L."/>
        </authorList>
    </citation>
    <scope>NUCLEOTIDE SEQUENCE [GENOMIC DNA]</scope>
    <source>
        <strain>WO-1</strain>
    </source>
</reference>
<reference key="2">
    <citation type="journal article" date="2009" name="Nature">
        <title>Evolution of pathogenicity and sexual reproduction in eight Candida genomes.</title>
        <authorList>
            <person name="Butler G."/>
            <person name="Rasmussen M.D."/>
            <person name="Lin M.F."/>
            <person name="Santos M.A.S."/>
            <person name="Sakthikumar S."/>
            <person name="Munro C.A."/>
            <person name="Rheinbay E."/>
            <person name="Grabherr M."/>
            <person name="Forche A."/>
            <person name="Reedy J.L."/>
            <person name="Agrafioti I."/>
            <person name="Arnaud M.B."/>
            <person name="Bates S."/>
            <person name="Brown A.J.P."/>
            <person name="Brunke S."/>
            <person name="Costanzo M.C."/>
            <person name="Fitzpatrick D.A."/>
            <person name="de Groot P.W.J."/>
            <person name="Harris D."/>
            <person name="Hoyer L.L."/>
            <person name="Hube B."/>
            <person name="Klis F.M."/>
            <person name="Kodira C."/>
            <person name="Lennard N."/>
            <person name="Logue M.E."/>
            <person name="Martin R."/>
            <person name="Neiman A.M."/>
            <person name="Nikolaou E."/>
            <person name="Quail M.A."/>
            <person name="Quinn J."/>
            <person name="Santos M.C."/>
            <person name="Schmitzberger F.F."/>
            <person name="Sherlock G."/>
            <person name="Shah P."/>
            <person name="Silverstein K.A.T."/>
            <person name="Skrzypek M.S."/>
            <person name="Soll D."/>
            <person name="Staggs R."/>
            <person name="Stansfield I."/>
            <person name="Stumpf M.P.H."/>
            <person name="Sudbery P.E."/>
            <person name="Srikantha T."/>
            <person name="Zeng Q."/>
            <person name="Berman J."/>
            <person name="Berriman M."/>
            <person name="Heitman J."/>
            <person name="Gow N.A.R."/>
            <person name="Lorenz M.C."/>
            <person name="Birren B.W."/>
            <person name="Kellis M."/>
            <person name="Cuomo C.A."/>
        </authorList>
    </citation>
    <scope>NUCLEOTIDE SEQUENCE [LARGE SCALE GENOMIC DNA]</scope>
    <source>
        <strain>WO-1</strain>
    </source>
</reference>
<organism>
    <name type="scientific">Candida albicans (strain WO-1)</name>
    <name type="common">Yeast</name>
    <dbReference type="NCBI Taxonomy" id="294748"/>
    <lineage>
        <taxon>Eukaryota</taxon>
        <taxon>Fungi</taxon>
        <taxon>Dikarya</taxon>
        <taxon>Ascomycota</taxon>
        <taxon>Saccharomycotina</taxon>
        <taxon>Pichiomycetes</taxon>
        <taxon>Debaryomycetaceae</taxon>
        <taxon>Candida/Lodderomyces clade</taxon>
        <taxon>Candida</taxon>
    </lineage>
</organism>
<dbReference type="EMBL" id="X76689">
    <property type="protein sequence ID" value="CAA54122.1"/>
    <property type="molecule type" value="Genomic_DNA"/>
</dbReference>
<dbReference type="EMBL" id="CM000312">
    <property type="status" value="NOT_ANNOTATED_CDS"/>
    <property type="molecule type" value="Genomic_DNA"/>
</dbReference>
<dbReference type="PIR" id="S50711">
    <property type="entry name" value="S50711"/>
</dbReference>
<dbReference type="SMR" id="P43059"/>
<dbReference type="TCDB" id="2.A.3.10.20">
    <property type="family name" value="the amino acid-polyamine-organocation (apc) family"/>
</dbReference>
<dbReference type="PaxDb" id="5476-P43059"/>
<dbReference type="Proteomes" id="UP000001429">
    <property type="component" value="Chromosome 6"/>
</dbReference>
<dbReference type="GO" id="GO:0016020">
    <property type="term" value="C:membrane"/>
    <property type="evidence" value="ECO:0007669"/>
    <property type="project" value="UniProtKB-SubCell"/>
</dbReference>
<dbReference type="GO" id="GO:0015171">
    <property type="term" value="F:amino acid transmembrane transporter activity"/>
    <property type="evidence" value="ECO:0007669"/>
    <property type="project" value="TreeGrafter"/>
</dbReference>
<dbReference type="FunFam" id="1.20.1740.10:FF:000006">
    <property type="entry name" value="General amino acid permease"/>
    <property type="match status" value="1"/>
</dbReference>
<dbReference type="Gene3D" id="1.20.1740.10">
    <property type="entry name" value="Amino acid/polyamine transporter I"/>
    <property type="match status" value="1"/>
</dbReference>
<dbReference type="InterPro" id="IPR004841">
    <property type="entry name" value="AA-permease/SLC12A_dom"/>
</dbReference>
<dbReference type="InterPro" id="IPR004840">
    <property type="entry name" value="Amino_acid_permease_CS"/>
</dbReference>
<dbReference type="InterPro" id="IPR050524">
    <property type="entry name" value="APC_YAT"/>
</dbReference>
<dbReference type="PANTHER" id="PTHR43341">
    <property type="entry name" value="AMINO ACID PERMEASE"/>
    <property type="match status" value="1"/>
</dbReference>
<dbReference type="PANTHER" id="PTHR43341:SF4">
    <property type="entry name" value="ARGININE PERMEASE CAN1-RELATED"/>
    <property type="match status" value="1"/>
</dbReference>
<dbReference type="Pfam" id="PF00324">
    <property type="entry name" value="AA_permease"/>
    <property type="match status" value="1"/>
</dbReference>
<dbReference type="PIRSF" id="PIRSF006060">
    <property type="entry name" value="AA_transporter"/>
    <property type="match status" value="1"/>
</dbReference>
<dbReference type="PROSITE" id="PS00218">
    <property type="entry name" value="AMINO_ACID_PERMEASE_1"/>
    <property type="match status" value="1"/>
</dbReference>
<feature type="chain" id="PRO_0000054149" description="Lysine/arginine permease">
    <location>
        <begin position="1"/>
        <end position="571"/>
    </location>
</feature>
<feature type="transmembrane region" description="Helical" evidence="1">
    <location>
        <begin position="69"/>
        <end position="89"/>
    </location>
</feature>
<feature type="transmembrane region" description="Helical" evidence="1">
    <location>
        <begin position="93"/>
        <end position="113"/>
    </location>
</feature>
<feature type="transmembrane region" description="Helical" evidence="1">
    <location>
        <begin position="148"/>
        <end position="168"/>
    </location>
</feature>
<feature type="transmembrane region" description="Helical" evidence="1">
    <location>
        <begin position="174"/>
        <end position="194"/>
    </location>
</feature>
<feature type="transmembrane region" description="Helical" evidence="1">
    <location>
        <begin position="204"/>
        <end position="224"/>
    </location>
</feature>
<feature type="transmembrane region" description="Helical" evidence="1">
    <location>
        <begin position="260"/>
        <end position="280"/>
    </location>
</feature>
<feature type="transmembrane region" description="Helical" evidence="1">
    <location>
        <begin position="297"/>
        <end position="317"/>
    </location>
</feature>
<feature type="transmembrane region" description="Helical" evidence="1">
    <location>
        <begin position="343"/>
        <end position="363"/>
    </location>
</feature>
<feature type="transmembrane region" description="Helical" evidence="1">
    <location>
        <begin position="393"/>
        <end position="413"/>
    </location>
</feature>
<feature type="transmembrane region" description="Helical" evidence="1">
    <location>
        <begin position="422"/>
        <end position="442"/>
    </location>
</feature>
<feature type="transmembrane region" description="Helical" evidence="1">
    <location>
        <begin position="465"/>
        <end position="485"/>
    </location>
</feature>
<feature type="transmembrane region" description="Helical" evidence="1">
    <location>
        <begin position="504"/>
        <end position="524"/>
    </location>
</feature>
<feature type="region of interest" description="Disordered" evidence="2">
    <location>
        <begin position="1"/>
        <end position="36"/>
    </location>
</feature>
<feature type="sequence conflict" description="In Ref. 1; CAA54122." evidence="3" ref="1">
    <original>L</original>
    <variation>S</variation>
    <location>
        <position position="20"/>
    </location>
</feature>
<feature type="sequence conflict" description="In Ref. 1; CAA54122." evidence="3" ref="1">
    <original>T</original>
    <variation>S</variation>
    <location>
        <position position="275"/>
    </location>
</feature>
<keyword id="KW-0029">Amino-acid transport</keyword>
<keyword id="KW-0472">Membrane</keyword>
<keyword id="KW-0812">Transmembrane</keyword>
<keyword id="KW-1133">Transmembrane helix</keyword>
<keyword id="KW-0813">Transport</keyword>
<protein>
    <recommendedName>
        <fullName>Lysine/arginine permease</fullName>
    </recommendedName>
    <alternativeName>
        <fullName>Basic amino acids permease</fullName>
    </alternativeName>
</protein>